<organism>
    <name type="scientific">Salmonella heidelberg (strain SL476)</name>
    <dbReference type="NCBI Taxonomy" id="454169"/>
    <lineage>
        <taxon>Bacteria</taxon>
        <taxon>Pseudomonadati</taxon>
        <taxon>Pseudomonadota</taxon>
        <taxon>Gammaproteobacteria</taxon>
        <taxon>Enterobacterales</taxon>
        <taxon>Enterobacteriaceae</taxon>
        <taxon>Salmonella</taxon>
    </lineage>
</organism>
<sequence>MSSWVEVSLNTPAQLSLPLYLPDDETFASFWPGDNASLLAALQNVLRQEHSGYIYLWAREGAGRSHLLHAACAELSQRGDAVGYVPLDKRTWFVPEVLDGMEHLSLVCIDNIECVAGDELWEMAIFDLYNRILESGKTRLLITGDRPPRQLNLGLPDLASRLDWGQIYKLQPLSDEDKLQALQLRARLRGFELPEDVGRFLLKRLDREMRTLFMTLDQLDHASITAQRKLTIPFVKEILKL</sequence>
<feature type="chain" id="PRO_1000137820" description="DnaA regulatory inactivator Hda">
    <location>
        <begin position="1"/>
        <end position="241"/>
    </location>
</feature>
<evidence type="ECO:0000250" key="1"/>
<evidence type="ECO:0000255" key="2">
    <source>
        <dbReference type="HAMAP-Rule" id="MF_01158"/>
    </source>
</evidence>
<protein>
    <recommendedName>
        <fullName evidence="2">DnaA regulatory inactivator Hda</fullName>
    </recommendedName>
</protein>
<dbReference type="EMBL" id="CP001120">
    <property type="protein sequence ID" value="ACF68142.1"/>
    <property type="molecule type" value="Genomic_DNA"/>
</dbReference>
<dbReference type="SMR" id="B4TD71"/>
<dbReference type="KEGG" id="seh:SeHA_C2755"/>
<dbReference type="HOGENOM" id="CLU_072265_1_1_6"/>
<dbReference type="Proteomes" id="UP000001866">
    <property type="component" value="Chromosome"/>
</dbReference>
<dbReference type="GO" id="GO:0006270">
    <property type="term" value="P:DNA replication initiation"/>
    <property type="evidence" value="ECO:0007669"/>
    <property type="project" value="TreeGrafter"/>
</dbReference>
<dbReference type="GO" id="GO:0032297">
    <property type="term" value="P:negative regulation of DNA-templated DNA replication initiation"/>
    <property type="evidence" value="ECO:0007669"/>
    <property type="project" value="InterPro"/>
</dbReference>
<dbReference type="FunFam" id="1.10.8.60:FF:000024">
    <property type="entry name" value="DnaA regulatory inactivator Hda"/>
    <property type="match status" value="1"/>
</dbReference>
<dbReference type="FunFam" id="3.40.50.300:FF:000452">
    <property type="entry name" value="DnaA regulatory inactivator Hda"/>
    <property type="match status" value="1"/>
</dbReference>
<dbReference type="Gene3D" id="1.10.8.60">
    <property type="match status" value="1"/>
</dbReference>
<dbReference type="Gene3D" id="3.40.50.300">
    <property type="entry name" value="P-loop containing nucleotide triphosphate hydrolases"/>
    <property type="match status" value="1"/>
</dbReference>
<dbReference type="HAMAP" id="MF_01158">
    <property type="entry name" value="Hda"/>
    <property type="match status" value="1"/>
</dbReference>
<dbReference type="InterPro" id="IPR020591">
    <property type="entry name" value="Chromosome_initiator_DnaA-like"/>
</dbReference>
<dbReference type="InterPro" id="IPR013317">
    <property type="entry name" value="DnaA_dom"/>
</dbReference>
<dbReference type="InterPro" id="IPR017788">
    <property type="entry name" value="Hda"/>
</dbReference>
<dbReference type="InterPro" id="IPR022864">
    <property type="entry name" value="Hda_Enterobact"/>
</dbReference>
<dbReference type="InterPro" id="IPR055199">
    <property type="entry name" value="Hda_lid"/>
</dbReference>
<dbReference type="InterPro" id="IPR027417">
    <property type="entry name" value="P-loop_NTPase"/>
</dbReference>
<dbReference type="NCBIfam" id="TIGR03420">
    <property type="entry name" value="DnaA_homol_Hda"/>
    <property type="match status" value="1"/>
</dbReference>
<dbReference type="NCBIfam" id="NF005982">
    <property type="entry name" value="PRK08084.1"/>
    <property type="match status" value="1"/>
</dbReference>
<dbReference type="PANTHER" id="PTHR30050">
    <property type="entry name" value="CHROMOSOMAL REPLICATION INITIATOR PROTEIN DNAA"/>
    <property type="match status" value="1"/>
</dbReference>
<dbReference type="PANTHER" id="PTHR30050:SF5">
    <property type="entry name" value="DNAA REGULATORY INACTIVATOR HDA"/>
    <property type="match status" value="1"/>
</dbReference>
<dbReference type="Pfam" id="PF00308">
    <property type="entry name" value="Bac_DnaA"/>
    <property type="match status" value="1"/>
</dbReference>
<dbReference type="Pfam" id="PF22688">
    <property type="entry name" value="Hda_lid"/>
    <property type="match status" value="1"/>
</dbReference>
<dbReference type="PRINTS" id="PR00051">
    <property type="entry name" value="DNAA"/>
</dbReference>
<dbReference type="SUPFAM" id="SSF52540">
    <property type="entry name" value="P-loop containing nucleoside triphosphate hydrolases"/>
    <property type="match status" value="1"/>
</dbReference>
<keyword id="KW-0235">DNA replication</keyword>
<keyword id="KW-0236">DNA replication inhibitor</keyword>
<proteinExistence type="inferred from homology"/>
<gene>
    <name evidence="2" type="primary">hda</name>
    <name type="ordered locus">SeHA_C2755</name>
</gene>
<accession>B4TD71</accession>
<comment type="function">
    <text evidence="1">Mediates the interaction of DNA replication initiator protein DnaA with DNA polymerase subunit beta sliding clamp (dnaN). Stimulates hydrolysis of ATP-DnaA to ADP-DnaA, rendering DnaA inactive for reinitiation, a process called regulatory inhibition of DnaA or RIDA (By similarity).</text>
</comment>
<comment type="subunit">
    <text evidence="2">The active form seems to be an ADP-bound monomer. Forms the RIDA complex (regulatory inactivation of DnaA) of ATP-DnaA, ADP-Hda and the DNA-loaded beta sliding clamp (dnaN).</text>
</comment>
<comment type="similarity">
    <text evidence="2">Belongs to the DnaA family. HdA subfamily.</text>
</comment>
<reference key="1">
    <citation type="journal article" date="2011" name="J. Bacteriol.">
        <title>Comparative genomics of 28 Salmonella enterica isolates: evidence for CRISPR-mediated adaptive sublineage evolution.</title>
        <authorList>
            <person name="Fricke W.F."/>
            <person name="Mammel M.K."/>
            <person name="McDermott P.F."/>
            <person name="Tartera C."/>
            <person name="White D.G."/>
            <person name="Leclerc J.E."/>
            <person name="Ravel J."/>
            <person name="Cebula T.A."/>
        </authorList>
    </citation>
    <scope>NUCLEOTIDE SEQUENCE [LARGE SCALE GENOMIC DNA]</scope>
    <source>
        <strain>SL476</strain>
    </source>
</reference>
<name>HDA_SALHS</name>